<sequence length="293" mass="33151">MDSIDTKRLNDSNASDRALSGCAVLFLGCSSLEHNFLSLYKDERGKFSVFKVIKLTLSDSVGGLEGYEILKLHDADPYLGVELKFMAMPPCQRFLESYACGSLTQFLSQHASRLLALPDGVEIETQLKAGVHTLDHSLQDIEICLDHIRQSQPVRLRDDEVTQLEQQLQNSYGPPSQPPQELPRNCFLFQKRVFDDRPLTPADQQRFAAHVGRDWKRVGRALQKNCRALKGPAIDNLAYEYEREGLYEQAYQLLGRFIQSEGRSAKLSRLISALEETKMTSMAEIMLGIQPRD</sequence>
<accession>Q9I9N5</accession>
<dbReference type="EMBL" id="AF231014">
    <property type="protein sequence ID" value="AAF66959.1"/>
    <property type="molecule type" value="Genomic_DNA"/>
</dbReference>
<dbReference type="EMBL" id="BC083425">
    <property type="protein sequence ID" value="AAH83425.1"/>
    <property type="molecule type" value="mRNA"/>
</dbReference>
<dbReference type="RefSeq" id="NP_571682.1">
    <property type="nucleotide sequence ID" value="NM_131607.2"/>
</dbReference>
<dbReference type="SMR" id="Q9I9N5"/>
<dbReference type="FunCoup" id="Q9I9N5">
    <property type="interactions" value="2849"/>
</dbReference>
<dbReference type="STRING" id="7955.ENSDARP00000052344"/>
<dbReference type="PaxDb" id="7955-ENSDARP00000052344"/>
<dbReference type="Ensembl" id="ENSDART00000052345">
    <property type="protein sequence ID" value="ENSDARP00000052344"/>
    <property type="gene ID" value="ENSDARG00000036057"/>
</dbReference>
<dbReference type="Ensembl" id="ENSDART00000181954">
    <property type="protein sequence ID" value="ENSDARP00000153680"/>
    <property type="gene ID" value="ENSDARG00000117083"/>
</dbReference>
<dbReference type="GeneID" id="58130"/>
<dbReference type="KEGG" id="dre:58130"/>
<dbReference type="AGR" id="ZFIN:ZDB-GENE-000511-5"/>
<dbReference type="CTD" id="8717"/>
<dbReference type="ZFIN" id="ZDB-GENE-000511-5">
    <property type="gene designation" value="tradd"/>
</dbReference>
<dbReference type="eggNOG" id="ENOG502RXWE">
    <property type="taxonomic scope" value="Eukaryota"/>
</dbReference>
<dbReference type="HOGENOM" id="CLU_052183_0_0_1"/>
<dbReference type="InParanoid" id="Q9I9N5"/>
<dbReference type="OMA" id="QPCSRFL"/>
<dbReference type="OrthoDB" id="9903238at2759"/>
<dbReference type="PhylomeDB" id="Q9I9N5"/>
<dbReference type="TreeFam" id="TF331882"/>
<dbReference type="Reactome" id="R-DRE-5357905">
    <property type="pathway name" value="Regulation of TNFR1 signaling"/>
</dbReference>
<dbReference type="Reactome" id="R-DRE-5357956">
    <property type="pathway name" value="TNFR1-induced NF-kappa-B signaling pathway"/>
</dbReference>
<dbReference type="PRO" id="PR:Q9I9N5"/>
<dbReference type="Proteomes" id="UP000000437">
    <property type="component" value="Alternate scaffold 7"/>
</dbReference>
<dbReference type="Proteomes" id="UP000000437">
    <property type="component" value="Chromosome 7"/>
</dbReference>
<dbReference type="Bgee" id="ENSDARG00000036057">
    <property type="expression patterns" value="Expressed in tail and 22 other cell types or tissues"/>
</dbReference>
<dbReference type="ExpressionAtlas" id="Q9I9N5">
    <property type="expression patterns" value="baseline"/>
</dbReference>
<dbReference type="GO" id="GO:0005737">
    <property type="term" value="C:cytoplasm"/>
    <property type="evidence" value="ECO:0007669"/>
    <property type="project" value="UniProtKB-SubCell"/>
</dbReference>
<dbReference type="GO" id="GO:0005856">
    <property type="term" value="C:cytoskeleton"/>
    <property type="evidence" value="ECO:0007669"/>
    <property type="project" value="UniProtKB-SubCell"/>
</dbReference>
<dbReference type="GO" id="GO:0005634">
    <property type="term" value="C:nucleus"/>
    <property type="evidence" value="ECO:0007669"/>
    <property type="project" value="UniProtKB-SubCell"/>
</dbReference>
<dbReference type="GO" id="GO:0002947">
    <property type="term" value="C:tumor necrosis factor receptor superfamily complex"/>
    <property type="evidence" value="ECO:0000318"/>
    <property type="project" value="GO_Central"/>
</dbReference>
<dbReference type="GO" id="GO:0005068">
    <property type="term" value="F:transmembrane receptor protein tyrosine kinase adaptor activity"/>
    <property type="evidence" value="ECO:0000318"/>
    <property type="project" value="GO_Central"/>
</dbReference>
<dbReference type="GO" id="GO:0097191">
    <property type="term" value="P:extrinsic apoptotic signaling pathway"/>
    <property type="evidence" value="ECO:0000318"/>
    <property type="project" value="GO_Central"/>
</dbReference>
<dbReference type="GO" id="GO:0043065">
    <property type="term" value="P:positive regulation of apoptotic process"/>
    <property type="evidence" value="ECO:0000314"/>
    <property type="project" value="ZFIN"/>
</dbReference>
<dbReference type="GO" id="GO:0043123">
    <property type="term" value="P:positive regulation of canonical NF-kappaB signal transduction"/>
    <property type="evidence" value="ECO:0007669"/>
    <property type="project" value="InterPro"/>
</dbReference>
<dbReference type="CDD" id="cd08780">
    <property type="entry name" value="Death_TRADD"/>
    <property type="match status" value="1"/>
</dbReference>
<dbReference type="Gene3D" id="1.10.533.10">
    <property type="entry name" value="Death Domain, Fas"/>
    <property type="match status" value="1"/>
</dbReference>
<dbReference type="Gene3D" id="3.30.70.680">
    <property type="entry name" value="TRADD, N-terminal domain"/>
    <property type="match status" value="1"/>
</dbReference>
<dbReference type="InterPro" id="IPR011029">
    <property type="entry name" value="DEATH-like_dom_sf"/>
</dbReference>
<dbReference type="InterPro" id="IPR000488">
    <property type="entry name" value="Death_dom"/>
</dbReference>
<dbReference type="InterPro" id="IPR035712">
    <property type="entry name" value="TRADD"/>
</dbReference>
<dbReference type="InterPro" id="IPR009095">
    <property type="entry name" value="TRADD_N"/>
</dbReference>
<dbReference type="InterPro" id="IPR036729">
    <property type="entry name" value="TRADD_N_sf"/>
</dbReference>
<dbReference type="PANTHER" id="PTHR14913">
    <property type="entry name" value="TUMOR NECROSIS FACTOR RECEPTOR TYPE 1-ASSOCIATED DEATH DOMAIN PROTEIN"/>
    <property type="match status" value="1"/>
</dbReference>
<dbReference type="PANTHER" id="PTHR14913:SF0">
    <property type="entry name" value="TUMOR NECROSIS FACTOR RECEPTOR TYPE 1-ASSOCIATED DEATH DOMAIN PROTEIN"/>
    <property type="match status" value="1"/>
</dbReference>
<dbReference type="Pfam" id="PF00531">
    <property type="entry name" value="Death"/>
    <property type="match status" value="1"/>
</dbReference>
<dbReference type="Pfam" id="PF09034">
    <property type="entry name" value="TRADD_N"/>
    <property type="match status" value="1"/>
</dbReference>
<dbReference type="SMART" id="SM00005">
    <property type="entry name" value="DEATH"/>
    <property type="match status" value="1"/>
</dbReference>
<dbReference type="SUPFAM" id="SSF47986">
    <property type="entry name" value="DEATH domain"/>
    <property type="match status" value="1"/>
</dbReference>
<dbReference type="SUPFAM" id="SSF55044">
    <property type="entry name" value="TRADD, N-terminal domain"/>
    <property type="match status" value="1"/>
</dbReference>
<dbReference type="PROSITE" id="PS50017">
    <property type="entry name" value="DEATH_DOMAIN"/>
    <property type="match status" value="1"/>
</dbReference>
<proteinExistence type="evidence at transcript level"/>
<organism>
    <name type="scientific">Danio rerio</name>
    <name type="common">Zebrafish</name>
    <name type="synonym">Brachydanio rerio</name>
    <dbReference type="NCBI Taxonomy" id="7955"/>
    <lineage>
        <taxon>Eukaryota</taxon>
        <taxon>Metazoa</taxon>
        <taxon>Chordata</taxon>
        <taxon>Craniata</taxon>
        <taxon>Vertebrata</taxon>
        <taxon>Euteleostomi</taxon>
        <taxon>Actinopterygii</taxon>
        <taxon>Neopterygii</taxon>
        <taxon>Teleostei</taxon>
        <taxon>Ostariophysi</taxon>
        <taxon>Cypriniformes</taxon>
        <taxon>Danionidae</taxon>
        <taxon>Danioninae</taxon>
        <taxon>Danio</taxon>
    </lineage>
</organism>
<feature type="chain" id="PRO_0000291659" description="Tumor necrosis factor receptor type 1-associated DEATH domain protein">
    <location>
        <begin position="1"/>
        <end position="293"/>
    </location>
</feature>
<feature type="domain" description="Death" evidence="3">
    <location>
        <begin position="200"/>
        <end position="290"/>
    </location>
</feature>
<feature type="short sequence motif" description="Nuclear export signal" evidence="2">
    <location>
        <begin position="156"/>
        <end position="171"/>
    </location>
</feature>
<feature type="short sequence motif" description="Nuclear localization signal" evidence="2">
    <location>
        <begin position="216"/>
        <end position="229"/>
    </location>
</feature>
<name>TRADD_DANRE</name>
<keyword id="KW-0053">Apoptosis</keyword>
<keyword id="KW-0963">Cytoplasm</keyword>
<keyword id="KW-0206">Cytoskeleton</keyword>
<keyword id="KW-0539">Nucleus</keyword>
<keyword id="KW-1185">Reference proteome</keyword>
<protein>
    <recommendedName>
        <fullName evidence="4">Tumor necrosis factor receptor type 1-associated DEATH domain protein</fullName>
        <shortName evidence="1">TNFR1-associated DEATH domain protein</shortName>
    </recommendedName>
    <alternativeName>
        <fullName evidence="1">TNFRSF1A-associated via death domain protein</fullName>
    </alternativeName>
</protein>
<reference evidence="5" key="1">
    <citation type="journal article" date="2000" name="Cell Death Differ.">
        <title>Genes with homology to mammalian apoptosis regulators identified in zebrafish.</title>
        <authorList>
            <person name="Inohara N."/>
            <person name="Nunez G."/>
        </authorList>
    </citation>
    <scope>NUCLEOTIDE SEQUENCE [GENOMIC DNA]</scope>
</reference>
<reference evidence="6" key="2">
    <citation type="submission" date="2004-10" db="EMBL/GenBank/DDBJ databases">
        <authorList>
            <consortium name="NIH - Zebrafish Gene Collection (ZGC) project"/>
        </authorList>
    </citation>
    <scope>NUCLEOTIDE SEQUENCE [LARGE SCALE MRNA]</scope>
    <source>
        <tissue evidence="6">Ovary</tissue>
    </source>
</reference>
<evidence type="ECO:0000250" key="1">
    <source>
        <dbReference type="UniProtKB" id="Q15628"/>
    </source>
</evidence>
<evidence type="ECO:0000250" key="2">
    <source>
        <dbReference type="UniProtKB" id="Q3U0V2"/>
    </source>
</evidence>
<evidence type="ECO:0000255" key="3">
    <source>
        <dbReference type="PROSITE-ProRule" id="PRU00064"/>
    </source>
</evidence>
<evidence type="ECO:0000305" key="4"/>
<evidence type="ECO:0000312" key="5">
    <source>
        <dbReference type="EMBL" id="AAF66959.1"/>
    </source>
</evidence>
<evidence type="ECO:0000312" key="6">
    <source>
        <dbReference type="EMBL" id="AAH83425.1"/>
    </source>
</evidence>
<evidence type="ECO:0000312" key="7">
    <source>
        <dbReference type="ZFIN" id="ZDB-GENE-000511-5"/>
    </source>
</evidence>
<comment type="function">
    <text evidence="1">Adapter molecule for tnfrsf1a that specifically associates with the cytoplasmic domain of activated tnfrsf1a mediating its interaction with fadd.</text>
</comment>
<comment type="subunit">
    <text evidence="1">Heterodimer with tnfrsf1a.</text>
</comment>
<comment type="subcellular location">
    <subcellularLocation>
        <location evidence="2">Nucleus</location>
    </subcellularLocation>
    <subcellularLocation>
        <location evidence="1">Cytoplasm</location>
    </subcellularLocation>
    <subcellularLocation>
        <location evidence="1">Cytoplasm</location>
        <location evidence="1">Cytoskeleton</location>
    </subcellularLocation>
    <text evidence="2">Shuttles between the cytoplasm and the nucleus.</text>
</comment>
<comment type="domain">
    <text evidence="1">Requires the intact death domain to associate with tnfrsf1a.</text>
</comment>
<gene>
    <name evidence="7" type="primary">tradd</name>
</gene>